<name>DPO3E_TREPA</name>
<accession>O83649</accession>
<proteinExistence type="inferred from homology"/>
<sequence>MIYDWVFAVHEHVAFTAFDTETTGLKAEEDRIIEIGAVTFDRKGIIARFSTLIFPDRAIPPDVSKINHITDDMLVNKPRFCEIVSDFSRFIKGTVLVAHNANFDVEFLNAELSLCKKQPLSHKVVDTYAMAQAVFPGLGRHQYRLQNLALQFGLTVHAAHRAEDDARVCMELFTTMIAHHAKQNGHCVNHAQSPTIKKLIQEIQASSTDCSQELF</sequence>
<comment type="function">
    <text evidence="1">DNA polymerase III is a complex, multichain enzyme responsible for most of the replicative synthesis in bacteria. The epsilon subunit contain the editing function and is a proofreading 3'-5' exonuclease (By similarity).</text>
</comment>
<comment type="catalytic activity">
    <reaction>
        <text>DNA(n) + a 2'-deoxyribonucleoside 5'-triphosphate = DNA(n+1) + diphosphate</text>
        <dbReference type="Rhea" id="RHEA:22508"/>
        <dbReference type="Rhea" id="RHEA-COMP:17339"/>
        <dbReference type="Rhea" id="RHEA-COMP:17340"/>
        <dbReference type="ChEBI" id="CHEBI:33019"/>
        <dbReference type="ChEBI" id="CHEBI:61560"/>
        <dbReference type="ChEBI" id="CHEBI:173112"/>
        <dbReference type="EC" id="2.7.7.7"/>
    </reaction>
</comment>
<comment type="cofactor">
    <cofactor evidence="1">
        <name>Mg(2+)</name>
        <dbReference type="ChEBI" id="CHEBI:18420"/>
    </cofactor>
    <cofactor evidence="1">
        <name>Mn(2+)</name>
        <dbReference type="ChEBI" id="CHEBI:29035"/>
    </cofactor>
    <text evidence="1">Binds 2 divalent metal cations. Magnesium or manganese.</text>
</comment>
<comment type="subunit">
    <text evidence="1">DNA polymerase III contains a core (composed of alpha, epsilon and theta chains) that associates with a tau subunit. This core dimerizes to form the POLIII' complex. PolIII' associates with the gamma complex (composed of gamma, delta, delta', psi and chi chains) and with the beta chain to form the complete DNA polymerase III complex (By similarity).</text>
</comment>
<feature type="chain" id="PRO_0000105490" description="DNA polymerase III subunit epsilon">
    <location>
        <begin position="1"/>
        <end position="215"/>
    </location>
</feature>
<feature type="active site" description="Proton acceptor" evidence="1">
    <location>
        <position position="160"/>
    </location>
</feature>
<feature type="binding site" evidence="1">
    <location>
        <position position="19"/>
    </location>
    <ligand>
        <name>a divalent metal cation</name>
        <dbReference type="ChEBI" id="CHEBI:60240"/>
        <label>1</label>
        <note>catalytic</note>
    </ligand>
</feature>
<feature type="binding site" evidence="1">
    <location>
        <position position="19"/>
    </location>
    <ligand>
        <name>a divalent metal cation</name>
        <dbReference type="ChEBI" id="CHEBI:60240"/>
        <label>2</label>
        <note>catalytic</note>
    </ligand>
</feature>
<feature type="binding site" evidence="1">
    <location>
        <position position="19"/>
    </location>
    <ligand>
        <name>substrate</name>
    </ligand>
</feature>
<feature type="binding site" evidence="1">
    <location>
        <position position="21"/>
    </location>
    <ligand>
        <name>a divalent metal cation</name>
        <dbReference type="ChEBI" id="CHEBI:60240"/>
        <label>1</label>
        <note>catalytic</note>
    </ligand>
</feature>
<feature type="binding site" evidence="1">
    <location>
        <position position="21"/>
    </location>
    <ligand>
        <name>substrate</name>
    </ligand>
</feature>
<feature type="binding site" evidence="1">
    <location>
        <position position="62"/>
    </location>
    <ligand>
        <name>substrate</name>
    </ligand>
</feature>
<feature type="binding site" evidence="2">
    <location>
        <position position="67"/>
    </location>
    <ligand>
        <name>substrate</name>
    </ligand>
</feature>
<feature type="binding site" evidence="1">
    <location>
        <position position="165"/>
    </location>
    <ligand>
        <name>a divalent metal cation</name>
        <dbReference type="ChEBI" id="CHEBI:60240"/>
        <label>1</label>
        <note>catalytic</note>
    </ligand>
</feature>
<feature type="binding site" evidence="1">
    <location>
        <position position="165"/>
    </location>
    <ligand>
        <name>substrate</name>
    </ligand>
</feature>
<gene>
    <name type="primary">dnaQ</name>
    <name type="ordered locus">TP_0643</name>
</gene>
<reference key="1">
    <citation type="journal article" date="1998" name="Science">
        <title>Complete genome sequence of Treponema pallidum, the syphilis spirochete.</title>
        <authorList>
            <person name="Fraser C.M."/>
            <person name="Norris S.J."/>
            <person name="Weinstock G.M."/>
            <person name="White O."/>
            <person name="Sutton G.G."/>
            <person name="Dodson R.J."/>
            <person name="Gwinn M.L."/>
            <person name="Hickey E.K."/>
            <person name="Clayton R.A."/>
            <person name="Ketchum K.A."/>
            <person name="Sodergren E."/>
            <person name="Hardham J.M."/>
            <person name="McLeod M.P."/>
            <person name="Salzberg S.L."/>
            <person name="Peterson J.D."/>
            <person name="Khalak H.G."/>
            <person name="Richardson D.L."/>
            <person name="Howell J.K."/>
            <person name="Chidambaram M."/>
            <person name="Utterback T.R."/>
            <person name="McDonald L.A."/>
            <person name="Artiach P."/>
            <person name="Bowman C."/>
            <person name="Cotton M.D."/>
            <person name="Fujii C."/>
            <person name="Garland S.A."/>
            <person name="Hatch B."/>
            <person name="Horst K."/>
            <person name="Roberts K.M."/>
            <person name="Sandusky M."/>
            <person name="Weidman J.F."/>
            <person name="Smith H.O."/>
            <person name="Venter J.C."/>
        </authorList>
    </citation>
    <scope>NUCLEOTIDE SEQUENCE [LARGE SCALE GENOMIC DNA]</scope>
    <source>
        <strain>Nichols</strain>
    </source>
</reference>
<evidence type="ECO:0000250" key="1"/>
<evidence type="ECO:0000255" key="2"/>
<protein>
    <recommendedName>
        <fullName>DNA polymerase III subunit epsilon</fullName>
        <ecNumber>2.7.7.7</ecNumber>
    </recommendedName>
</protein>
<dbReference type="EC" id="2.7.7.7"/>
<dbReference type="EMBL" id="AE000520">
    <property type="protein sequence ID" value="AAC65617.1"/>
    <property type="molecule type" value="Genomic_DNA"/>
</dbReference>
<dbReference type="PIR" id="B71299">
    <property type="entry name" value="B71299"/>
</dbReference>
<dbReference type="RefSeq" id="WP_010882088.1">
    <property type="nucleotide sequence ID" value="NC_021490.2"/>
</dbReference>
<dbReference type="SMR" id="O83649"/>
<dbReference type="IntAct" id="O83649">
    <property type="interactions" value="1"/>
</dbReference>
<dbReference type="STRING" id="243276.TP_0643"/>
<dbReference type="EnsemblBacteria" id="AAC65617">
    <property type="protein sequence ID" value="AAC65617"/>
    <property type="gene ID" value="TP_0643"/>
</dbReference>
<dbReference type="KEGG" id="tpa:TP_0643"/>
<dbReference type="KEGG" id="tpw:TPANIC_0643"/>
<dbReference type="eggNOG" id="COG0847">
    <property type="taxonomic scope" value="Bacteria"/>
</dbReference>
<dbReference type="HOGENOM" id="CLU_047806_7_1_12"/>
<dbReference type="OrthoDB" id="9804290at2"/>
<dbReference type="Proteomes" id="UP000000811">
    <property type="component" value="Chromosome"/>
</dbReference>
<dbReference type="GO" id="GO:0005829">
    <property type="term" value="C:cytosol"/>
    <property type="evidence" value="ECO:0007669"/>
    <property type="project" value="TreeGrafter"/>
</dbReference>
<dbReference type="GO" id="GO:0008408">
    <property type="term" value="F:3'-5' exonuclease activity"/>
    <property type="evidence" value="ECO:0007669"/>
    <property type="project" value="TreeGrafter"/>
</dbReference>
<dbReference type="GO" id="GO:0003677">
    <property type="term" value="F:DNA binding"/>
    <property type="evidence" value="ECO:0007669"/>
    <property type="project" value="InterPro"/>
</dbReference>
<dbReference type="GO" id="GO:0003887">
    <property type="term" value="F:DNA-directed DNA polymerase activity"/>
    <property type="evidence" value="ECO:0007669"/>
    <property type="project" value="UniProtKB-KW"/>
</dbReference>
<dbReference type="GO" id="GO:0046872">
    <property type="term" value="F:metal ion binding"/>
    <property type="evidence" value="ECO:0007669"/>
    <property type="project" value="UniProtKB-KW"/>
</dbReference>
<dbReference type="GO" id="GO:0045004">
    <property type="term" value="P:DNA replication proofreading"/>
    <property type="evidence" value="ECO:0007669"/>
    <property type="project" value="TreeGrafter"/>
</dbReference>
<dbReference type="CDD" id="cd06127">
    <property type="entry name" value="DEDDh"/>
    <property type="match status" value="1"/>
</dbReference>
<dbReference type="FunFam" id="3.30.420.10:FF:000045">
    <property type="entry name" value="3'-5' exonuclease DinG"/>
    <property type="match status" value="1"/>
</dbReference>
<dbReference type="Gene3D" id="3.30.420.10">
    <property type="entry name" value="Ribonuclease H-like superfamily/Ribonuclease H"/>
    <property type="match status" value="1"/>
</dbReference>
<dbReference type="InterPro" id="IPR006054">
    <property type="entry name" value="DnaQ"/>
</dbReference>
<dbReference type="InterPro" id="IPR013520">
    <property type="entry name" value="Exonuclease_RNaseT/DNA_pol3"/>
</dbReference>
<dbReference type="InterPro" id="IPR012337">
    <property type="entry name" value="RNaseH-like_sf"/>
</dbReference>
<dbReference type="InterPro" id="IPR036397">
    <property type="entry name" value="RNaseH_sf"/>
</dbReference>
<dbReference type="NCBIfam" id="TIGR00573">
    <property type="entry name" value="dnaq"/>
    <property type="match status" value="1"/>
</dbReference>
<dbReference type="PANTHER" id="PTHR30231">
    <property type="entry name" value="DNA POLYMERASE III SUBUNIT EPSILON"/>
    <property type="match status" value="1"/>
</dbReference>
<dbReference type="PANTHER" id="PTHR30231:SF41">
    <property type="entry name" value="DNA POLYMERASE III SUBUNIT EPSILON"/>
    <property type="match status" value="1"/>
</dbReference>
<dbReference type="Pfam" id="PF00929">
    <property type="entry name" value="RNase_T"/>
    <property type="match status" value="1"/>
</dbReference>
<dbReference type="SMART" id="SM00479">
    <property type="entry name" value="EXOIII"/>
    <property type="match status" value="1"/>
</dbReference>
<dbReference type="SUPFAM" id="SSF53098">
    <property type="entry name" value="Ribonuclease H-like"/>
    <property type="match status" value="1"/>
</dbReference>
<organism>
    <name type="scientific">Treponema pallidum (strain Nichols)</name>
    <dbReference type="NCBI Taxonomy" id="243276"/>
    <lineage>
        <taxon>Bacteria</taxon>
        <taxon>Pseudomonadati</taxon>
        <taxon>Spirochaetota</taxon>
        <taxon>Spirochaetia</taxon>
        <taxon>Spirochaetales</taxon>
        <taxon>Treponemataceae</taxon>
        <taxon>Treponema</taxon>
    </lineage>
</organism>
<keyword id="KW-0235">DNA replication</keyword>
<keyword id="KW-0239">DNA-directed DNA polymerase</keyword>
<keyword id="KW-0269">Exonuclease</keyword>
<keyword id="KW-0378">Hydrolase</keyword>
<keyword id="KW-0460">Magnesium</keyword>
<keyword id="KW-0464">Manganese</keyword>
<keyword id="KW-0479">Metal-binding</keyword>
<keyword id="KW-0540">Nuclease</keyword>
<keyword id="KW-0548">Nucleotidyltransferase</keyword>
<keyword id="KW-1185">Reference proteome</keyword>
<keyword id="KW-0808">Transferase</keyword>